<name>PDXB_ECOUT</name>
<feature type="chain" id="PRO_0000297439" description="Erythronate-4-phosphate dehydrogenase">
    <location>
        <begin position="1"/>
        <end position="378"/>
    </location>
</feature>
<feature type="active site" evidence="1">
    <location>
        <position position="208"/>
    </location>
</feature>
<feature type="active site" evidence="1">
    <location>
        <position position="237"/>
    </location>
</feature>
<feature type="active site" description="Proton donor" evidence="1">
    <location>
        <position position="254"/>
    </location>
</feature>
<feature type="binding site" evidence="1">
    <location>
        <position position="45"/>
    </location>
    <ligand>
        <name>substrate</name>
    </ligand>
</feature>
<feature type="binding site" evidence="1">
    <location>
        <position position="66"/>
    </location>
    <ligand>
        <name>substrate</name>
    </ligand>
</feature>
<feature type="binding site" evidence="1">
    <location>
        <position position="146"/>
    </location>
    <ligand>
        <name>NAD(+)</name>
        <dbReference type="ChEBI" id="CHEBI:57540"/>
    </ligand>
</feature>
<feature type="binding site" evidence="1">
    <location>
        <position position="175"/>
    </location>
    <ligand>
        <name>NAD(+)</name>
        <dbReference type="ChEBI" id="CHEBI:57540"/>
    </ligand>
</feature>
<feature type="binding site" evidence="1">
    <location>
        <position position="232"/>
    </location>
    <ligand>
        <name>NAD(+)</name>
        <dbReference type="ChEBI" id="CHEBI:57540"/>
    </ligand>
</feature>
<feature type="binding site" evidence="1">
    <location>
        <position position="257"/>
    </location>
    <ligand>
        <name>NAD(+)</name>
        <dbReference type="ChEBI" id="CHEBI:57540"/>
    </ligand>
</feature>
<feature type="binding site" evidence="1">
    <location>
        <position position="258"/>
    </location>
    <ligand>
        <name>substrate</name>
    </ligand>
</feature>
<dbReference type="EC" id="1.1.1.290" evidence="1"/>
<dbReference type="EMBL" id="CP000243">
    <property type="protein sequence ID" value="ABE08072.1"/>
    <property type="molecule type" value="Genomic_DNA"/>
</dbReference>
<dbReference type="RefSeq" id="WP_000699136.1">
    <property type="nucleotide sequence ID" value="NZ_CP064825.1"/>
</dbReference>
<dbReference type="SMR" id="Q1R992"/>
<dbReference type="KEGG" id="eci:UTI89_C2605"/>
<dbReference type="HOGENOM" id="CLU_019796_4_0_6"/>
<dbReference type="UniPathway" id="UPA00244">
    <property type="reaction ID" value="UER00310"/>
</dbReference>
<dbReference type="Proteomes" id="UP000001952">
    <property type="component" value="Chromosome"/>
</dbReference>
<dbReference type="GO" id="GO:0005829">
    <property type="term" value="C:cytosol"/>
    <property type="evidence" value="ECO:0007669"/>
    <property type="project" value="UniProtKB-ARBA"/>
</dbReference>
<dbReference type="GO" id="GO:0033711">
    <property type="term" value="F:4-phosphoerythronate dehydrogenase activity"/>
    <property type="evidence" value="ECO:0007669"/>
    <property type="project" value="UniProtKB-EC"/>
</dbReference>
<dbReference type="GO" id="GO:0051287">
    <property type="term" value="F:NAD binding"/>
    <property type="evidence" value="ECO:0007669"/>
    <property type="project" value="InterPro"/>
</dbReference>
<dbReference type="GO" id="GO:0046983">
    <property type="term" value="F:protein dimerization activity"/>
    <property type="evidence" value="ECO:0007669"/>
    <property type="project" value="InterPro"/>
</dbReference>
<dbReference type="GO" id="GO:0036001">
    <property type="term" value="P:'de novo' pyridoxal 5'-phosphate biosynthetic process"/>
    <property type="evidence" value="ECO:0007669"/>
    <property type="project" value="TreeGrafter"/>
</dbReference>
<dbReference type="GO" id="GO:0008615">
    <property type="term" value="P:pyridoxine biosynthetic process"/>
    <property type="evidence" value="ECO:0007669"/>
    <property type="project" value="UniProtKB-UniRule"/>
</dbReference>
<dbReference type="CDD" id="cd12158">
    <property type="entry name" value="ErythrP_dh"/>
    <property type="match status" value="1"/>
</dbReference>
<dbReference type="FunFam" id="3.30.1370.170:FF:000001">
    <property type="entry name" value="Erythronate-4-phosphate dehydrogenase"/>
    <property type="match status" value="1"/>
</dbReference>
<dbReference type="FunFam" id="3.40.50.720:FF:000093">
    <property type="entry name" value="Erythronate-4-phosphate dehydrogenase"/>
    <property type="match status" value="1"/>
</dbReference>
<dbReference type="Gene3D" id="3.30.1370.170">
    <property type="match status" value="1"/>
</dbReference>
<dbReference type="Gene3D" id="3.40.50.720">
    <property type="entry name" value="NAD(P)-binding Rossmann-like Domain"/>
    <property type="match status" value="2"/>
</dbReference>
<dbReference type="HAMAP" id="MF_01825">
    <property type="entry name" value="PdxB"/>
    <property type="match status" value="1"/>
</dbReference>
<dbReference type="InterPro" id="IPR006139">
    <property type="entry name" value="D-isomer_2_OHA_DH_cat_dom"/>
</dbReference>
<dbReference type="InterPro" id="IPR029753">
    <property type="entry name" value="D-isomer_DH_CS"/>
</dbReference>
<dbReference type="InterPro" id="IPR029752">
    <property type="entry name" value="D-isomer_DH_CS1"/>
</dbReference>
<dbReference type="InterPro" id="IPR006140">
    <property type="entry name" value="D-isomer_DH_NAD-bd"/>
</dbReference>
<dbReference type="InterPro" id="IPR020921">
    <property type="entry name" value="Erythronate-4-P_DHase"/>
</dbReference>
<dbReference type="InterPro" id="IPR024531">
    <property type="entry name" value="Erythronate-4-P_DHase_dimer"/>
</dbReference>
<dbReference type="InterPro" id="IPR036291">
    <property type="entry name" value="NAD(P)-bd_dom_sf"/>
</dbReference>
<dbReference type="InterPro" id="IPR038251">
    <property type="entry name" value="PdxB_dimer_sf"/>
</dbReference>
<dbReference type="NCBIfam" id="NF001309">
    <property type="entry name" value="PRK00257.1"/>
    <property type="match status" value="1"/>
</dbReference>
<dbReference type="NCBIfam" id="NF011966">
    <property type="entry name" value="PRK15438.1"/>
    <property type="match status" value="1"/>
</dbReference>
<dbReference type="PANTHER" id="PTHR42938">
    <property type="entry name" value="FORMATE DEHYDROGENASE 1"/>
    <property type="match status" value="1"/>
</dbReference>
<dbReference type="PANTHER" id="PTHR42938:SF9">
    <property type="entry name" value="FORMATE DEHYDROGENASE 1"/>
    <property type="match status" value="1"/>
</dbReference>
<dbReference type="Pfam" id="PF00389">
    <property type="entry name" value="2-Hacid_dh"/>
    <property type="match status" value="1"/>
</dbReference>
<dbReference type="Pfam" id="PF02826">
    <property type="entry name" value="2-Hacid_dh_C"/>
    <property type="match status" value="1"/>
</dbReference>
<dbReference type="Pfam" id="PF11890">
    <property type="entry name" value="DUF3410"/>
    <property type="match status" value="1"/>
</dbReference>
<dbReference type="SUPFAM" id="SSF52283">
    <property type="entry name" value="Formate/glycerate dehydrogenase catalytic domain-like"/>
    <property type="match status" value="1"/>
</dbReference>
<dbReference type="SUPFAM" id="SSF51735">
    <property type="entry name" value="NAD(P)-binding Rossmann-fold domains"/>
    <property type="match status" value="1"/>
</dbReference>
<dbReference type="PROSITE" id="PS00065">
    <property type="entry name" value="D_2_HYDROXYACID_DH_1"/>
    <property type="match status" value="1"/>
</dbReference>
<dbReference type="PROSITE" id="PS00671">
    <property type="entry name" value="D_2_HYDROXYACID_DH_3"/>
    <property type="match status" value="1"/>
</dbReference>
<reference key="1">
    <citation type="journal article" date="2006" name="Proc. Natl. Acad. Sci. U.S.A.">
        <title>Identification of genes subject to positive selection in uropathogenic strains of Escherichia coli: a comparative genomics approach.</title>
        <authorList>
            <person name="Chen S.L."/>
            <person name="Hung C.-S."/>
            <person name="Xu J."/>
            <person name="Reigstad C.S."/>
            <person name="Magrini V."/>
            <person name="Sabo A."/>
            <person name="Blasiar D."/>
            <person name="Bieri T."/>
            <person name="Meyer R.R."/>
            <person name="Ozersky P."/>
            <person name="Armstrong J.R."/>
            <person name="Fulton R.S."/>
            <person name="Latreille J.P."/>
            <person name="Spieth J."/>
            <person name="Hooton T.M."/>
            <person name="Mardis E.R."/>
            <person name="Hultgren S.J."/>
            <person name="Gordon J.I."/>
        </authorList>
    </citation>
    <scope>NUCLEOTIDE SEQUENCE [LARGE SCALE GENOMIC DNA]</scope>
    <source>
        <strain>UTI89 / UPEC</strain>
    </source>
</reference>
<sequence>MKILVDENMPYARDLFSRLGEVTAVPGRPIPVAQLADADALMVRSVTKVNESLLAGKPIKFVGTATAGTDHVDEAWLKQAGIGFSAAPGCNAIAVVEYVFSSLLMLAERDGFSLHERTVGIVGVGNVGRRLQARLEALGIKTLLCDPPRADRGDEGDFRSLDELVQHADILTFHTPLFKDGPYKTLHLADEKLIRSLKPGAILINACRGAVVDNTALLTCLSEGQKLSVVLDVWEGEPELNVELLKKVDIGTPHIAGYTLEGKARGTTQVFEAYSKFIGHEQHVALDTLLPAPEFGRITLHGPLDQPTLKRLVHLVYDVRRDDAPLRKVAGIPGEFDKLRKNYLERREWSSLYVICDDASAASLLCKLGFNAVHHPAR</sequence>
<proteinExistence type="inferred from homology"/>
<evidence type="ECO:0000255" key="1">
    <source>
        <dbReference type="HAMAP-Rule" id="MF_01825"/>
    </source>
</evidence>
<comment type="function">
    <text evidence="1">Catalyzes the oxidation of erythronate-4-phosphate to 3-hydroxy-2-oxo-4-phosphonooxybutanoate.</text>
</comment>
<comment type="catalytic activity">
    <reaction evidence="1">
        <text>4-phospho-D-erythronate + NAD(+) = (R)-3-hydroxy-2-oxo-4-phosphooxybutanoate + NADH + H(+)</text>
        <dbReference type="Rhea" id="RHEA:18829"/>
        <dbReference type="ChEBI" id="CHEBI:15378"/>
        <dbReference type="ChEBI" id="CHEBI:57540"/>
        <dbReference type="ChEBI" id="CHEBI:57945"/>
        <dbReference type="ChEBI" id="CHEBI:58538"/>
        <dbReference type="ChEBI" id="CHEBI:58766"/>
        <dbReference type="EC" id="1.1.1.290"/>
    </reaction>
</comment>
<comment type="pathway">
    <text evidence="1">Cofactor biosynthesis; pyridoxine 5'-phosphate biosynthesis; pyridoxine 5'-phosphate from D-erythrose 4-phosphate: step 2/5.</text>
</comment>
<comment type="subunit">
    <text evidence="1">Homodimer.</text>
</comment>
<comment type="subcellular location">
    <subcellularLocation>
        <location evidence="1">Cytoplasm</location>
    </subcellularLocation>
</comment>
<comment type="similarity">
    <text evidence="1">Belongs to the D-isomer specific 2-hydroxyacid dehydrogenase family. PdxB subfamily.</text>
</comment>
<protein>
    <recommendedName>
        <fullName evidence="1">Erythronate-4-phosphate dehydrogenase</fullName>
        <ecNumber evidence="1">1.1.1.290</ecNumber>
    </recommendedName>
</protein>
<gene>
    <name evidence="1" type="primary">pdxB</name>
    <name type="ordered locus">UTI89_C2605</name>
</gene>
<accession>Q1R992</accession>
<keyword id="KW-0963">Cytoplasm</keyword>
<keyword id="KW-0520">NAD</keyword>
<keyword id="KW-0560">Oxidoreductase</keyword>
<keyword id="KW-0664">Pyridoxine biosynthesis</keyword>
<organism>
    <name type="scientific">Escherichia coli (strain UTI89 / UPEC)</name>
    <dbReference type="NCBI Taxonomy" id="364106"/>
    <lineage>
        <taxon>Bacteria</taxon>
        <taxon>Pseudomonadati</taxon>
        <taxon>Pseudomonadota</taxon>
        <taxon>Gammaproteobacteria</taxon>
        <taxon>Enterobacterales</taxon>
        <taxon>Enterobacteriaceae</taxon>
        <taxon>Escherichia</taxon>
    </lineage>
</organism>